<name>TRMD_LACAC</name>
<accession>Q5FJK7</accession>
<protein>
    <recommendedName>
        <fullName evidence="1">tRNA (guanine-N(1)-)-methyltransferase</fullName>
        <ecNumber evidence="1">2.1.1.228</ecNumber>
    </recommendedName>
    <alternativeName>
        <fullName evidence="1">M1G-methyltransferase</fullName>
    </alternativeName>
    <alternativeName>
        <fullName evidence="1">tRNA [GM37] methyltransferase</fullName>
    </alternativeName>
</protein>
<comment type="function">
    <text evidence="1">Specifically methylates guanosine-37 in various tRNAs.</text>
</comment>
<comment type="catalytic activity">
    <reaction evidence="1">
        <text>guanosine(37) in tRNA + S-adenosyl-L-methionine = N(1)-methylguanosine(37) in tRNA + S-adenosyl-L-homocysteine + H(+)</text>
        <dbReference type="Rhea" id="RHEA:36899"/>
        <dbReference type="Rhea" id="RHEA-COMP:10145"/>
        <dbReference type="Rhea" id="RHEA-COMP:10147"/>
        <dbReference type="ChEBI" id="CHEBI:15378"/>
        <dbReference type="ChEBI" id="CHEBI:57856"/>
        <dbReference type="ChEBI" id="CHEBI:59789"/>
        <dbReference type="ChEBI" id="CHEBI:73542"/>
        <dbReference type="ChEBI" id="CHEBI:74269"/>
        <dbReference type="EC" id="2.1.1.228"/>
    </reaction>
</comment>
<comment type="subunit">
    <text evidence="1">Homodimer.</text>
</comment>
<comment type="subcellular location">
    <subcellularLocation>
        <location evidence="1">Cytoplasm</location>
    </subcellularLocation>
</comment>
<comment type="similarity">
    <text evidence="1">Belongs to the RNA methyltransferase TrmD family.</text>
</comment>
<feature type="chain" id="PRO_0000060391" description="tRNA (guanine-N(1)-)-methyltransferase">
    <location>
        <begin position="1"/>
        <end position="242"/>
    </location>
</feature>
<feature type="binding site" evidence="1">
    <location>
        <position position="108"/>
    </location>
    <ligand>
        <name>S-adenosyl-L-methionine</name>
        <dbReference type="ChEBI" id="CHEBI:59789"/>
    </ligand>
</feature>
<feature type="binding site" evidence="1">
    <location>
        <begin position="127"/>
        <end position="132"/>
    </location>
    <ligand>
        <name>S-adenosyl-L-methionine</name>
        <dbReference type="ChEBI" id="CHEBI:59789"/>
    </ligand>
</feature>
<sequence length="242" mass="27258">MKINILTLFPDMFTPLQVSMLGRGLEDGKWDLNLVNFRDFTTDLHHHVDDTPYGGGAGMVLQIMPIKKALDSLPSTGKIIITAPQGKTFNEKMAQEWAKEDELTFICGHYEGFDQRVYDLADETVSIGDYVLTGGELPTMSMVDATVRLLPGILGNSASSVEESFSHGLLEYPQYTRPADFEGKKSARSFKPVVIIKRLLNGDTIRLLKATYLHRPDMLENRNLSDEEKKMLQEIKNEMNED</sequence>
<proteinExistence type="inferred from homology"/>
<organism>
    <name type="scientific">Lactobacillus acidophilus (strain ATCC 700396 / NCK56 / N2 / NCFM)</name>
    <dbReference type="NCBI Taxonomy" id="272621"/>
    <lineage>
        <taxon>Bacteria</taxon>
        <taxon>Bacillati</taxon>
        <taxon>Bacillota</taxon>
        <taxon>Bacilli</taxon>
        <taxon>Lactobacillales</taxon>
        <taxon>Lactobacillaceae</taxon>
        <taxon>Lactobacillus</taxon>
    </lineage>
</organism>
<evidence type="ECO:0000255" key="1">
    <source>
        <dbReference type="HAMAP-Rule" id="MF_00605"/>
    </source>
</evidence>
<dbReference type="EC" id="2.1.1.228" evidence="1"/>
<dbReference type="EMBL" id="CP000033">
    <property type="protein sequence ID" value="AAV43117.1"/>
    <property type="molecule type" value="Genomic_DNA"/>
</dbReference>
<dbReference type="RefSeq" id="WP_011254407.1">
    <property type="nucleotide sequence ID" value="NC_006814.3"/>
</dbReference>
<dbReference type="RefSeq" id="YP_194148.1">
    <property type="nucleotide sequence ID" value="NC_006814.3"/>
</dbReference>
<dbReference type="SMR" id="Q5FJK7"/>
<dbReference type="STRING" id="272621.LBA1287"/>
<dbReference type="KEGG" id="lac:LBA1287"/>
<dbReference type="PATRIC" id="fig|272621.13.peg.1219"/>
<dbReference type="eggNOG" id="COG0336">
    <property type="taxonomic scope" value="Bacteria"/>
</dbReference>
<dbReference type="HOGENOM" id="CLU_047363_0_1_9"/>
<dbReference type="OrthoDB" id="9807416at2"/>
<dbReference type="BioCyc" id="LACI272621:G1G49-1267-MONOMER"/>
<dbReference type="Proteomes" id="UP000006381">
    <property type="component" value="Chromosome"/>
</dbReference>
<dbReference type="GO" id="GO:0005829">
    <property type="term" value="C:cytosol"/>
    <property type="evidence" value="ECO:0007669"/>
    <property type="project" value="TreeGrafter"/>
</dbReference>
<dbReference type="GO" id="GO:0052906">
    <property type="term" value="F:tRNA (guanine(37)-N1)-methyltransferase activity"/>
    <property type="evidence" value="ECO:0007669"/>
    <property type="project" value="UniProtKB-UniRule"/>
</dbReference>
<dbReference type="GO" id="GO:0002939">
    <property type="term" value="P:tRNA N1-guanine methylation"/>
    <property type="evidence" value="ECO:0007669"/>
    <property type="project" value="TreeGrafter"/>
</dbReference>
<dbReference type="CDD" id="cd18080">
    <property type="entry name" value="TrmD-like"/>
    <property type="match status" value="1"/>
</dbReference>
<dbReference type="FunFam" id="3.40.1280.10:FF:000001">
    <property type="entry name" value="tRNA (guanine-N(1)-)-methyltransferase"/>
    <property type="match status" value="1"/>
</dbReference>
<dbReference type="Gene3D" id="3.40.1280.10">
    <property type="match status" value="1"/>
</dbReference>
<dbReference type="Gene3D" id="1.10.1270.20">
    <property type="entry name" value="tRNA(m1g37)methyltransferase, domain 2"/>
    <property type="match status" value="1"/>
</dbReference>
<dbReference type="HAMAP" id="MF_00605">
    <property type="entry name" value="TrmD"/>
    <property type="match status" value="1"/>
</dbReference>
<dbReference type="InterPro" id="IPR029028">
    <property type="entry name" value="Alpha/beta_knot_MTases"/>
</dbReference>
<dbReference type="InterPro" id="IPR023148">
    <property type="entry name" value="tRNA_m1G_MeTrfase_C_sf"/>
</dbReference>
<dbReference type="InterPro" id="IPR002649">
    <property type="entry name" value="tRNA_m1G_MeTrfase_TrmD"/>
</dbReference>
<dbReference type="InterPro" id="IPR029026">
    <property type="entry name" value="tRNA_m1G_MTases_N"/>
</dbReference>
<dbReference type="InterPro" id="IPR016009">
    <property type="entry name" value="tRNA_MeTrfase_TRMD/TRM10"/>
</dbReference>
<dbReference type="NCBIfam" id="NF000648">
    <property type="entry name" value="PRK00026.1"/>
    <property type="match status" value="1"/>
</dbReference>
<dbReference type="NCBIfam" id="TIGR00088">
    <property type="entry name" value="trmD"/>
    <property type="match status" value="1"/>
</dbReference>
<dbReference type="PANTHER" id="PTHR46417">
    <property type="entry name" value="TRNA (GUANINE-N(1)-)-METHYLTRANSFERASE"/>
    <property type="match status" value="1"/>
</dbReference>
<dbReference type="PANTHER" id="PTHR46417:SF1">
    <property type="entry name" value="TRNA (GUANINE-N(1)-)-METHYLTRANSFERASE"/>
    <property type="match status" value="1"/>
</dbReference>
<dbReference type="Pfam" id="PF01746">
    <property type="entry name" value="tRNA_m1G_MT"/>
    <property type="match status" value="1"/>
</dbReference>
<dbReference type="PIRSF" id="PIRSF000386">
    <property type="entry name" value="tRNA_mtase"/>
    <property type="match status" value="1"/>
</dbReference>
<dbReference type="SUPFAM" id="SSF75217">
    <property type="entry name" value="alpha/beta knot"/>
    <property type="match status" value="1"/>
</dbReference>
<gene>
    <name evidence="1" type="primary">trmD</name>
    <name type="ordered locus">LBA1287</name>
</gene>
<keyword id="KW-0963">Cytoplasm</keyword>
<keyword id="KW-0489">Methyltransferase</keyword>
<keyword id="KW-1185">Reference proteome</keyword>
<keyword id="KW-0949">S-adenosyl-L-methionine</keyword>
<keyword id="KW-0808">Transferase</keyword>
<keyword id="KW-0819">tRNA processing</keyword>
<reference key="1">
    <citation type="journal article" date="2005" name="Proc. Natl. Acad. Sci. U.S.A.">
        <title>Complete genome sequence of the probiotic lactic acid bacterium Lactobacillus acidophilus NCFM.</title>
        <authorList>
            <person name="Altermann E."/>
            <person name="Russell W.M."/>
            <person name="Azcarate-Peril M.A."/>
            <person name="Barrangou R."/>
            <person name="Buck B.L."/>
            <person name="McAuliffe O."/>
            <person name="Souther N."/>
            <person name="Dobson A."/>
            <person name="Duong T."/>
            <person name="Callanan M."/>
            <person name="Lick S."/>
            <person name="Hamrick A."/>
            <person name="Cano R."/>
            <person name="Klaenhammer T.R."/>
        </authorList>
    </citation>
    <scope>NUCLEOTIDE SEQUENCE [LARGE SCALE GENOMIC DNA]</scope>
    <source>
        <strain>ATCC 700396 / NCK56 / N2 / NCFM</strain>
    </source>
</reference>